<name>RS21_BLOFL</name>
<proteinExistence type="inferred from homology"/>
<comment type="similarity">
    <text evidence="1">Belongs to the bacterial ribosomal protein bS21 family.</text>
</comment>
<evidence type="ECO:0000255" key="1">
    <source>
        <dbReference type="HAMAP-Rule" id="MF_00358"/>
    </source>
</evidence>
<evidence type="ECO:0000305" key="2"/>
<organism>
    <name type="scientific">Blochmanniella floridana</name>
    <dbReference type="NCBI Taxonomy" id="203907"/>
    <lineage>
        <taxon>Bacteria</taxon>
        <taxon>Pseudomonadati</taxon>
        <taxon>Pseudomonadota</taxon>
        <taxon>Gammaproteobacteria</taxon>
        <taxon>Enterobacterales</taxon>
        <taxon>Enterobacteriaceae</taxon>
        <taxon>ant endosymbionts</taxon>
        <taxon>Candidatus Blochmanniella</taxon>
    </lineage>
</organism>
<reference key="1">
    <citation type="journal article" date="2003" name="Proc. Natl. Acad. Sci. U.S.A.">
        <title>The genome sequence of Blochmannia floridanus: comparative analysis of reduced genomes.</title>
        <authorList>
            <person name="Gil R."/>
            <person name="Silva F.J."/>
            <person name="Zientz E."/>
            <person name="Delmotte F."/>
            <person name="Gonzalez-Candelas F."/>
            <person name="Latorre A."/>
            <person name="Rausell C."/>
            <person name="Kamerbeek J."/>
            <person name="Gadau J."/>
            <person name="Hoelldobler B."/>
            <person name="van Ham R.C.H.J."/>
            <person name="Gross R."/>
            <person name="Moya A."/>
        </authorList>
    </citation>
    <scope>NUCLEOTIDE SEQUENCE [LARGE SCALE GENOMIC DNA]</scope>
</reference>
<gene>
    <name evidence="1" type="primary">rpsU</name>
    <name type="ordered locus">Bfl058</name>
</gene>
<protein>
    <recommendedName>
        <fullName evidence="1">Small ribosomal subunit protein bS21</fullName>
    </recommendedName>
    <alternativeName>
        <fullName evidence="2">30S ribosomal protein S21</fullName>
    </alternativeName>
</protein>
<keyword id="KW-1185">Reference proteome</keyword>
<keyword id="KW-0687">Ribonucleoprotein</keyword>
<keyword id="KW-0689">Ribosomal protein</keyword>
<sequence>MPIIKVRENEPFDVALRRFKRSCEKAGILSEVRRREFYEKPTTERKRAKASAIKRHIKKINREQLKKSRSF</sequence>
<dbReference type="EMBL" id="BX248583">
    <property type="protein sequence ID" value="CAD83583.1"/>
    <property type="molecule type" value="Genomic_DNA"/>
</dbReference>
<dbReference type="SMR" id="Q7VQR0"/>
<dbReference type="STRING" id="203907.Bfl058"/>
<dbReference type="KEGG" id="bfl:Bfl058"/>
<dbReference type="eggNOG" id="COG0828">
    <property type="taxonomic scope" value="Bacteria"/>
</dbReference>
<dbReference type="HOGENOM" id="CLU_159258_1_0_6"/>
<dbReference type="OrthoDB" id="9799244at2"/>
<dbReference type="Proteomes" id="UP000002192">
    <property type="component" value="Chromosome"/>
</dbReference>
<dbReference type="GO" id="GO:1990904">
    <property type="term" value="C:ribonucleoprotein complex"/>
    <property type="evidence" value="ECO:0007669"/>
    <property type="project" value="UniProtKB-KW"/>
</dbReference>
<dbReference type="GO" id="GO:0005840">
    <property type="term" value="C:ribosome"/>
    <property type="evidence" value="ECO:0007669"/>
    <property type="project" value="UniProtKB-KW"/>
</dbReference>
<dbReference type="GO" id="GO:0003735">
    <property type="term" value="F:structural constituent of ribosome"/>
    <property type="evidence" value="ECO:0007669"/>
    <property type="project" value="InterPro"/>
</dbReference>
<dbReference type="GO" id="GO:0006412">
    <property type="term" value="P:translation"/>
    <property type="evidence" value="ECO:0007669"/>
    <property type="project" value="UniProtKB-UniRule"/>
</dbReference>
<dbReference type="FunFam" id="1.20.5.1150:FF:000001">
    <property type="entry name" value="30S ribosomal protein S21"/>
    <property type="match status" value="1"/>
</dbReference>
<dbReference type="Gene3D" id="1.20.5.1150">
    <property type="entry name" value="Ribosomal protein S8"/>
    <property type="match status" value="1"/>
</dbReference>
<dbReference type="HAMAP" id="MF_00358">
    <property type="entry name" value="Ribosomal_bS21"/>
    <property type="match status" value="1"/>
</dbReference>
<dbReference type="InterPro" id="IPR001911">
    <property type="entry name" value="Ribosomal_bS21"/>
</dbReference>
<dbReference type="InterPro" id="IPR018278">
    <property type="entry name" value="Ribosomal_bS21_CS"/>
</dbReference>
<dbReference type="InterPro" id="IPR038380">
    <property type="entry name" value="Ribosomal_bS21_sf"/>
</dbReference>
<dbReference type="NCBIfam" id="TIGR00030">
    <property type="entry name" value="S21p"/>
    <property type="match status" value="1"/>
</dbReference>
<dbReference type="PANTHER" id="PTHR21109">
    <property type="entry name" value="MITOCHONDRIAL 28S RIBOSOMAL PROTEIN S21"/>
    <property type="match status" value="1"/>
</dbReference>
<dbReference type="PANTHER" id="PTHR21109:SF22">
    <property type="entry name" value="SMALL RIBOSOMAL SUBUNIT PROTEIN BS21"/>
    <property type="match status" value="1"/>
</dbReference>
<dbReference type="Pfam" id="PF01165">
    <property type="entry name" value="Ribosomal_S21"/>
    <property type="match status" value="1"/>
</dbReference>
<dbReference type="PRINTS" id="PR00976">
    <property type="entry name" value="RIBOSOMALS21"/>
</dbReference>
<dbReference type="PROSITE" id="PS01181">
    <property type="entry name" value="RIBOSOMAL_S21"/>
    <property type="match status" value="1"/>
</dbReference>
<accession>Q7VQR0</accession>
<feature type="chain" id="PRO_0000178320" description="Small ribosomal subunit protein bS21">
    <location>
        <begin position="1"/>
        <end position="71"/>
    </location>
</feature>